<protein>
    <recommendedName>
        <fullName>Protoheme IX farnesyltransferase, mitochondrial</fullName>
        <ecNumber evidence="2">2.5.1.141</ecNumber>
    </recommendedName>
    <alternativeName>
        <fullName>Heme O synthase</fullName>
    </alternativeName>
</protein>
<name>COX10_EMENI</name>
<keyword id="KW-0350">Heme biosynthesis</keyword>
<keyword id="KW-0472">Membrane</keyword>
<keyword id="KW-0496">Mitochondrion</keyword>
<keyword id="KW-1185">Reference proteome</keyword>
<keyword id="KW-0808">Transferase</keyword>
<keyword id="KW-0809">Transit peptide</keyword>
<keyword id="KW-0812">Transmembrane</keyword>
<keyword id="KW-1133">Transmembrane helix</keyword>
<dbReference type="EC" id="2.5.1.141" evidence="2"/>
<dbReference type="EMBL" id="AACD01000027">
    <property type="protein sequence ID" value="EAA64008.1"/>
    <property type="molecule type" value="Genomic_DNA"/>
</dbReference>
<dbReference type="EMBL" id="BN001307">
    <property type="protein sequence ID" value="CBF85435.1"/>
    <property type="molecule type" value="Genomic_DNA"/>
</dbReference>
<dbReference type="RefSeq" id="XP_659326.1">
    <property type="nucleotide sequence ID" value="XM_654234.1"/>
</dbReference>
<dbReference type="SMR" id="Q5BCK8"/>
<dbReference type="FunCoup" id="Q5BCK8">
    <property type="interactions" value="791"/>
</dbReference>
<dbReference type="STRING" id="227321.Q5BCK8"/>
<dbReference type="EnsemblFungi" id="CBF85435">
    <property type="protein sequence ID" value="CBF85435"/>
    <property type="gene ID" value="ANIA_01722"/>
</dbReference>
<dbReference type="KEGG" id="ani:ANIA_01722"/>
<dbReference type="VEuPathDB" id="FungiDB:AN1722"/>
<dbReference type="eggNOG" id="KOG1380">
    <property type="taxonomic scope" value="Eukaryota"/>
</dbReference>
<dbReference type="HOGENOM" id="CLU_029631_2_0_1"/>
<dbReference type="InParanoid" id="Q5BCK8"/>
<dbReference type="OMA" id="TSAYGMY"/>
<dbReference type="OrthoDB" id="5211at2759"/>
<dbReference type="Proteomes" id="UP000000560">
    <property type="component" value="Chromosome VII"/>
</dbReference>
<dbReference type="GO" id="GO:0031966">
    <property type="term" value="C:mitochondrial membrane"/>
    <property type="evidence" value="ECO:0007669"/>
    <property type="project" value="UniProtKB-SubCell"/>
</dbReference>
<dbReference type="GO" id="GO:0005739">
    <property type="term" value="C:mitochondrion"/>
    <property type="evidence" value="ECO:0000318"/>
    <property type="project" value="GO_Central"/>
</dbReference>
<dbReference type="GO" id="GO:0008495">
    <property type="term" value="F:protoheme IX farnesyltransferase activity"/>
    <property type="evidence" value="ECO:0000318"/>
    <property type="project" value="GO_Central"/>
</dbReference>
<dbReference type="GO" id="GO:0006784">
    <property type="term" value="P:heme A biosynthetic process"/>
    <property type="evidence" value="ECO:0000318"/>
    <property type="project" value="GO_Central"/>
</dbReference>
<dbReference type="CDD" id="cd13957">
    <property type="entry name" value="PT_UbiA_Cox10"/>
    <property type="match status" value="1"/>
</dbReference>
<dbReference type="FunFam" id="1.10.357.140:FF:000004">
    <property type="entry name" value="Protoheme IX farnesyltransferase, mitochondrial"/>
    <property type="match status" value="1"/>
</dbReference>
<dbReference type="Gene3D" id="1.10.357.140">
    <property type="entry name" value="UbiA prenyltransferase"/>
    <property type="match status" value="1"/>
</dbReference>
<dbReference type="HAMAP" id="MF_00154">
    <property type="entry name" value="CyoE_CtaB"/>
    <property type="match status" value="1"/>
</dbReference>
<dbReference type="InterPro" id="IPR006369">
    <property type="entry name" value="Protohaem_IX_farnesylTrfase"/>
</dbReference>
<dbReference type="InterPro" id="IPR000537">
    <property type="entry name" value="UbiA_prenyltransferase"/>
</dbReference>
<dbReference type="InterPro" id="IPR030470">
    <property type="entry name" value="UbiA_prenylTrfase_CS"/>
</dbReference>
<dbReference type="InterPro" id="IPR044878">
    <property type="entry name" value="UbiA_sf"/>
</dbReference>
<dbReference type="PANTHER" id="PTHR43448">
    <property type="entry name" value="PROTOHEME IX FARNESYLTRANSFERASE, MITOCHONDRIAL"/>
    <property type="match status" value="1"/>
</dbReference>
<dbReference type="PANTHER" id="PTHR43448:SF2">
    <property type="entry name" value="PROTOHEME IX FARNESYLTRANSFERASE, MITOCHONDRIAL"/>
    <property type="match status" value="1"/>
</dbReference>
<dbReference type="Pfam" id="PF01040">
    <property type="entry name" value="UbiA"/>
    <property type="match status" value="1"/>
</dbReference>
<dbReference type="PROSITE" id="PS00943">
    <property type="entry name" value="UBIA"/>
    <property type="match status" value="1"/>
</dbReference>
<proteinExistence type="inferred from homology"/>
<feature type="transit peptide" description="Mitochondrion" evidence="3">
    <location>
        <begin position="1"/>
        <end position="42"/>
    </location>
</feature>
<feature type="chain" id="PRO_0000045415" description="Protoheme IX farnesyltransferase, mitochondrial">
    <location>
        <begin position="43"/>
        <end position="506"/>
    </location>
</feature>
<feature type="transmembrane region" description="Helical" evidence="3">
    <location>
        <begin position="163"/>
        <end position="183"/>
    </location>
</feature>
<feature type="transmembrane region" description="Helical" evidence="3">
    <location>
        <begin position="199"/>
        <end position="221"/>
    </location>
</feature>
<feature type="transmembrane region" description="Helical" evidence="3">
    <location>
        <begin position="247"/>
        <end position="267"/>
    </location>
</feature>
<feature type="transmembrane region" description="Helical" evidence="3">
    <location>
        <begin position="269"/>
        <end position="289"/>
    </location>
</feature>
<feature type="transmembrane region" description="Helical" evidence="3">
    <location>
        <begin position="297"/>
        <end position="317"/>
    </location>
</feature>
<feature type="transmembrane region" description="Helical" evidence="3">
    <location>
        <begin position="337"/>
        <end position="357"/>
    </location>
</feature>
<feature type="transmembrane region" description="Helical" evidence="3">
    <location>
        <begin position="390"/>
        <end position="410"/>
    </location>
</feature>
<feature type="transmembrane region" description="Helical" evidence="3">
    <location>
        <begin position="439"/>
        <end position="459"/>
    </location>
</feature>
<feature type="region of interest" description="Disordered" evidence="4">
    <location>
        <begin position="45"/>
        <end position="131"/>
    </location>
</feature>
<feature type="compositionally biased region" description="Polar residues" evidence="4">
    <location>
        <begin position="45"/>
        <end position="61"/>
    </location>
</feature>
<feature type="compositionally biased region" description="Low complexity" evidence="4">
    <location>
        <begin position="73"/>
        <end position="88"/>
    </location>
</feature>
<feature type="compositionally biased region" description="Polar residues" evidence="4">
    <location>
        <begin position="89"/>
        <end position="100"/>
    </location>
</feature>
<reference key="1">
    <citation type="journal article" date="2005" name="Nature">
        <title>Sequencing of Aspergillus nidulans and comparative analysis with A. fumigatus and A. oryzae.</title>
        <authorList>
            <person name="Galagan J.E."/>
            <person name="Calvo S.E."/>
            <person name="Cuomo C."/>
            <person name="Ma L.-J."/>
            <person name="Wortman J.R."/>
            <person name="Batzoglou S."/>
            <person name="Lee S.-I."/>
            <person name="Bastuerkmen M."/>
            <person name="Spevak C.C."/>
            <person name="Clutterbuck J."/>
            <person name="Kapitonov V."/>
            <person name="Jurka J."/>
            <person name="Scazzocchio C."/>
            <person name="Farman M.L."/>
            <person name="Butler J."/>
            <person name="Purcell S."/>
            <person name="Harris S."/>
            <person name="Braus G.H."/>
            <person name="Draht O."/>
            <person name="Busch S."/>
            <person name="D'Enfert C."/>
            <person name="Bouchier C."/>
            <person name="Goldman G.H."/>
            <person name="Bell-Pedersen D."/>
            <person name="Griffiths-Jones S."/>
            <person name="Doonan J.H."/>
            <person name="Yu J."/>
            <person name="Vienken K."/>
            <person name="Pain A."/>
            <person name="Freitag M."/>
            <person name="Selker E.U."/>
            <person name="Archer D.B."/>
            <person name="Penalva M.A."/>
            <person name="Oakley B.R."/>
            <person name="Momany M."/>
            <person name="Tanaka T."/>
            <person name="Kumagai T."/>
            <person name="Asai K."/>
            <person name="Machida M."/>
            <person name="Nierman W.C."/>
            <person name="Denning D.W."/>
            <person name="Caddick M.X."/>
            <person name="Hynes M."/>
            <person name="Paoletti M."/>
            <person name="Fischer R."/>
            <person name="Miller B.L."/>
            <person name="Dyer P.S."/>
            <person name="Sachs M.S."/>
            <person name="Osmani S.A."/>
            <person name="Birren B.W."/>
        </authorList>
    </citation>
    <scope>NUCLEOTIDE SEQUENCE [LARGE SCALE GENOMIC DNA]</scope>
    <source>
        <strain>FGSC A4 / ATCC 38163 / CBS 112.46 / NRRL 194 / M139</strain>
    </source>
</reference>
<reference key="2">
    <citation type="journal article" date="2009" name="Fungal Genet. Biol.">
        <title>The 2008 update of the Aspergillus nidulans genome annotation: a community effort.</title>
        <authorList>
            <person name="Wortman J.R."/>
            <person name="Gilsenan J.M."/>
            <person name="Joardar V."/>
            <person name="Deegan J."/>
            <person name="Clutterbuck J."/>
            <person name="Andersen M.R."/>
            <person name="Archer D."/>
            <person name="Bencina M."/>
            <person name="Braus G."/>
            <person name="Coutinho P."/>
            <person name="von Dohren H."/>
            <person name="Doonan J."/>
            <person name="Driessen A.J."/>
            <person name="Durek P."/>
            <person name="Espeso E."/>
            <person name="Fekete E."/>
            <person name="Flipphi M."/>
            <person name="Estrada C.G."/>
            <person name="Geysens S."/>
            <person name="Goldman G."/>
            <person name="de Groot P.W."/>
            <person name="Hansen K."/>
            <person name="Harris S.D."/>
            <person name="Heinekamp T."/>
            <person name="Helmstaedt K."/>
            <person name="Henrissat B."/>
            <person name="Hofmann G."/>
            <person name="Homan T."/>
            <person name="Horio T."/>
            <person name="Horiuchi H."/>
            <person name="James S."/>
            <person name="Jones M."/>
            <person name="Karaffa L."/>
            <person name="Karanyi Z."/>
            <person name="Kato M."/>
            <person name="Keller N."/>
            <person name="Kelly D.E."/>
            <person name="Kiel J.A."/>
            <person name="Kim J.M."/>
            <person name="van der Klei I.J."/>
            <person name="Klis F.M."/>
            <person name="Kovalchuk A."/>
            <person name="Krasevec N."/>
            <person name="Kubicek C.P."/>
            <person name="Liu B."/>
            <person name="Maccabe A."/>
            <person name="Meyer V."/>
            <person name="Mirabito P."/>
            <person name="Miskei M."/>
            <person name="Mos M."/>
            <person name="Mullins J."/>
            <person name="Nelson D.R."/>
            <person name="Nielsen J."/>
            <person name="Oakley B.R."/>
            <person name="Osmani S.A."/>
            <person name="Pakula T."/>
            <person name="Paszewski A."/>
            <person name="Paulsen I."/>
            <person name="Pilsyk S."/>
            <person name="Pocsi I."/>
            <person name="Punt P.J."/>
            <person name="Ram A.F."/>
            <person name="Ren Q."/>
            <person name="Robellet X."/>
            <person name="Robson G."/>
            <person name="Seiboth B."/>
            <person name="van Solingen P."/>
            <person name="Specht T."/>
            <person name="Sun J."/>
            <person name="Taheri-Talesh N."/>
            <person name="Takeshita N."/>
            <person name="Ussery D."/>
            <person name="vanKuyk P.A."/>
            <person name="Visser H."/>
            <person name="van de Vondervoort P.J."/>
            <person name="de Vries R.P."/>
            <person name="Walton J."/>
            <person name="Xiang X."/>
            <person name="Xiong Y."/>
            <person name="Zeng A.P."/>
            <person name="Brandt B.W."/>
            <person name="Cornell M.J."/>
            <person name="van den Hondel C.A."/>
            <person name="Visser J."/>
            <person name="Oliver S.G."/>
            <person name="Turner G."/>
        </authorList>
    </citation>
    <scope>GENOME REANNOTATION</scope>
    <source>
        <strain>FGSC A4 / ATCC 38163 / CBS 112.46 / NRRL 194 / M139</strain>
    </source>
</reference>
<organism>
    <name type="scientific">Emericella nidulans (strain FGSC A4 / ATCC 38163 / CBS 112.46 / NRRL 194 / M139)</name>
    <name type="common">Aspergillus nidulans</name>
    <dbReference type="NCBI Taxonomy" id="227321"/>
    <lineage>
        <taxon>Eukaryota</taxon>
        <taxon>Fungi</taxon>
        <taxon>Dikarya</taxon>
        <taxon>Ascomycota</taxon>
        <taxon>Pezizomycotina</taxon>
        <taxon>Eurotiomycetes</taxon>
        <taxon>Eurotiomycetidae</taxon>
        <taxon>Eurotiales</taxon>
        <taxon>Aspergillaceae</taxon>
        <taxon>Aspergillus</taxon>
        <taxon>Aspergillus subgen. Nidulantes</taxon>
    </lineage>
</organism>
<accession>Q5BCK8</accession>
<accession>C8VP21</accession>
<sequence length="506" mass="54874">MILRSSLGRLGVARESPLCLQCLNRSRPSFPAVNKLASISRLQSTVAGQSPSSSVNKTYFSSHKGDSHLTPQPSLFTSLSPSNSPSQLNRGHSTPSTSPELSELPHRRRKRLKEAAAQNNGAEPVIPPDASAQLSNFSSTLPKTSLRRKLAAFFALTKPRLSFLVLLSTTSAYGIYPVSSILALDPTIAPLPTLSTSTLTFLYLTTGTFLSACSANTLNMIFEPKYDAQMSRTRNRPLVRGLVTRRAAVFFAIATAAVGLGLLYFGTNPTVTGLSAANIALYAFVYTPLKRMHVINTWIGAIVGGIPPMMGWVAAAGQGATTGHDTWRDMLFGENSLGGWLLGGILFAWQFPHFNALSHTIREEYKGAGYKMLCWTNPARNARVALRYSVLMFPLSIGLWWAGIVGHGFLVSSTVANGWLTKEAYGFWKHQGANGTARGLFWASIWQLPILLVGALVTKKGLWDGVWGGIFGQPIEDDDDDYVYYEEVSPGKTINQSPTSPSSPVV</sequence>
<evidence type="ECO:0000250" key="1"/>
<evidence type="ECO:0000250" key="2">
    <source>
        <dbReference type="UniProtKB" id="P24009"/>
    </source>
</evidence>
<evidence type="ECO:0000255" key="3"/>
<evidence type="ECO:0000256" key="4">
    <source>
        <dbReference type="SAM" id="MobiDB-lite"/>
    </source>
</evidence>
<evidence type="ECO:0000305" key="5"/>
<comment type="function">
    <text evidence="1">Converts protoheme IX and farnesyl diphosphate to heme O.</text>
</comment>
<comment type="catalytic activity">
    <reaction evidence="2">
        <text>heme b + (2E,6E)-farnesyl diphosphate + H2O = Fe(II)-heme o + diphosphate</text>
        <dbReference type="Rhea" id="RHEA:28070"/>
        <dbReference type="ChEBI" id="CHEBI:15377"/>
        <dbReference type="ChEBI" id="CHEBI:33019"/>
        <dbReference type="ChEBI" id="CHEBI:60344"/>
        <dbReference type="ChEBI" id="CHEBI:60530"/>
        <dbReference type="ChEBI" id="CHEBI:175763"/>
        <dbReference type="EC" id="2.5.1.141"/>
    </reaction>
</comment>
<comment type="subcellular location">
    <subcellularLocation>
        <location evidence="1">Mitochondrion membrane</location>
        <topology evidence="1">Multi-pass membrane protein</topology>
    </subcellularLocation>
</comment>
<comment type="similarity">
    <text evidence="5">Belongs to the UbiA prenyltransferase family.</text>
</comment>
<gene>
    <name type="primary">cox10</name>
    <name type="ORF">AN1722</name>
</gene>